<sequence length="59" mass="6514">MFAGLPSLSHEQQQKAVERIQELMSQGMSSGEAIAQVAGELRANHTGERIVARFEDEDE</sequence>
<dbReference type="EMBL" id="CP001113">
    <property type="protein sequence ID" value="ACF61106.1"/>
    <property type="molecule type" value="Genomic_DNA"/>
</dbReference>
<dbReference type="RefSeq" id="WP_000457328.1">
    <property type="nucleotide sequence ID" value="NZ_CCMR01000003.1"/>
</dbReference>
<dbReference type="SMR" id="B4SUL6"/>
<dbReference type="KEGG" id="see:SNSL254_A1963"/>
<dbReference type="HOGENOM" id="CLU_185263_0_0_6"/>
<dbReference type="Proteomes" id="UP000008824">
    <property type="component" value="Chromosome"/>
</dbReference>
<dbReference type="HAMAP" id="MF_00507">
    <property type="entry name" value="UPF0181"/>
    <property type="match status" value="1"/>
</dbReference>
<dbReference type="InterPro" id="IPR005371">
    <property type="entry name" value="UPF0181"/>
</dbReference>
<dbReference type="NCBIfam" id="NF003476">
    <property type="entry name" value="PRK05114.1"/>
    <property type="match status" value="1"/>
</dbReference>
<dbReference type="Pfam" id="PF03701">
    <property type="entry name" value="UPF0181"/>
    <property type="match status" value="1"/>
</dbReference>
<protein>
    <recommendedName>
        <fullName evidence="1">UPF0181 protein YoaH</fullName>
    </recommendedName>
</protein>
<proteinExistence type="inferred from homology"/>
<evidence type="ECO:0000255" key="1">
    <source>
        <dbReference type="HAMAP-Rule" id="MF_00507"/>
    </source>
</evidence>
<reference key="1">
    <citation type="journal article" date="2011" name="J. Bacteriol.">
        <title>Comparative genomics of 28 Salmonella enterica isolates: evidence for CRISPR-mediated adaptive sublineage evolution.</title>
        <authorList>
            <person name="Fricke W.F."/>
            <person name="Mammel M.K."/>
            <person name="McDermott P.F."/>
            <person name="Tartera C."/>
            <person name="White D.G."/>
            <person name="Leclerc J.E."/>
            <person name="Ravel J."/>
            <person name="Cebula T.A."/>
        </authorList>
    </citation>
    <scope>NUCLEOTIDE SEQUENCE [LARGE SCALE GENOMIC DNA]</scope>
    <source>
        <strain>SL254</strain>
    </source>
</reference>
<organism>
    <name type="scientific">Salmonella newport (strain SL254)</name>
    <dbReference type="NCBI Taxonomy" id="423368"/>
    <lineage>
        <taxon>Bacteria</taxon>
        <taxon>Pseudomonadati</taxon>
        <taxon>Pseudomonadota</taxon>
        <taxon>Gammaproteobacteria</taxon>
        <taxon>Enterobacterales</taxon>
        <taxon>Enterobacteriaceae</taxon>
        <taxon>Salmonella</taxon>
    </lineage>
</organism>
<gene>
    <name evidence="1" type="primary">yoaH</name>
    <name type="ordered locus">SNSL254_A1963</name>
</gene>
<accession>B4SUL6</accession>
<feature type="chain" id="PRO_1000127058" description="UPF0181 protein YoaH">
    <location>
        <begin position="1"/>
        <end position="59"/>
    </location>
</feature>
<comment type="similarity">
    <text evidence="1">Belongs to the UPF0181 family.</text>
</comment>
<name>YOAH_SALNS</name>